<reference key="1">
    <citation type="journal article" date="1991" name="J. Biol. Chem.">
        <title>Cloning of a 16-kDa ubiquitin carrier protein from wheat and Arabidopsis thaliana. Identification of functional domains by in vitro mutagenesis.</title>
        <authorList>
            <person name="Sullivan M.L."/>
            <person name="Vierstra R.D."/>
        </authorList>
    </citation>
    <scope>NUCLEOTIDE SEQUENCE [MRNA]</scope>
    <source>
        <strain>cv. Columbia</strain>
    </source>
</reference>
<reference key="2">
    <citation type="journal article" date="1994" name="Plant Mol. Biol.">
        <title>Homologues of wheat ubiquitin-conjugating enzymes -- TaUBC1 and TaUBC4 are encoded by small multigene families in Arabidopsis thaliana.</title>
        <authorList>
            <person name="Sullivan M.L."/>
            <person name="Carpenter T.B."/>
            <person name="Vierstra R.D."/>
        </authorList>
    </citation>
    <scope>NUCLEOTIDE SEQUENCE [GENOMIC DNA]</scope>
    <source>
        <strain>cv. Columbia</strain>
    </source>
</reference>
<reference key="3">
    <citation type="journal article" date="2005" name="Plant Physiol.">
        <title>Genome analysis and functional characterization of the E2 and RING-type E3 ligase ubiquitination enzymes of Arabidopsis.</title>
        <authorList>
            <person name="Kraft E."/>
            <person name="Stone S.L."/>
            <person name="Ma L."/>
            <person name="Su N."/>
            <person name="Gao Y."/>
            <person name="Lau O.-S."/>
            <person name="Deng X.-W."/>
            <person name="Callis J."/>
        </authorList>
    </citation>
    <scope>NUCLEOTIDE SEQUENCE [MRNA]</scope>
    <scope>FUNCTION</scope>
    <scope>TISSUE SPECIFICITY</scope>
    <scope>GENE FAMILY</scope>
    <scope>NOMENCLATURE</scope>
</reference>
<reference key="4">
    <citation type="journal article" date="2000" name="Nature">
        <title>Sequence and analysis of chromosome 1 of the plant Arabidopsis thaliana.</title>
        <authorList>
            <person name="Theologis A."/>
            <person name="Ecker J.R."/>
            <person name="Palm C.J."/>
            <person name="Federspiel N.A."/>
            <person name="Kaul S."/>
            <person name="White O."/>
            <person name="Alonso J."/>
            <person name="Altafi H."/>
            <person name="Araujo R."/>
            <person name="Bowman C.L."/>
            <person name="Brooks S.Y."/>
            <person name="Buehler E."/>
            <person name="Chan A."/>
            <person name="Chao Q."/>
            <person name="Chen H."/>
            <person name="Cheuk R.F."/>
            <person name="Chin C.W."/>
            <person name="Chung M.K."/>
            <person name="Conn L."/>
            <person name="Conway A.B."/>
            <person name="Conway A.R."/>
            <person name="Creasy T.H."/>
            <person name="Dewar K."/>
            <person name="Dunn P."/>
            <person name="Etgu P."/>
            <person name="Feldblyum T.V."/>
            <person name="Feng J.-D."/>
            <person name="Fong B."/>
            <person name="Fujii C.Y."/>
            <person name="Gill J.E."/>
            <person name="Goldsmith A.D."/>
            <person name="Haas B."/>
            <person name="Hansen N.F."/>
            <person name="Hughes B."/>
            <person name="Huizar L."/>
            <person name="Hunter J.L."/>
            <person name="Jenkins J."/>
            <person name="Johnson-Hopson C."/>
            <person name="Khan S."/>
            <person name="Khaykin E."/>
            <person name="Kim C.J."/>
            <person name="Koo H.L."/>
            <person name="Kremenetskaia I."/>
            <person name="Kurtz D.B."/>
            <person name="Kwan A."/>
            <person name="Lam B."/>
            <person name="Langin-Hooper S."/>
            <person name="Lee A."/>
            <person name="Lee J.M."/>
            <person name="Lenz C.A."/>
            <person name="Li J.H."/>
            <person name="Li Y.-P."/>
            <person name="Lin X."/>
            <person name="Liu S.X."/>
            <person name="Liu Z.A."/>
            <person name="Luros J.S."/>
            <person name="Maiti R."/>
            <person name="Marziali A."/>
            <person name="Militscher J."/>
            <person name="Miranda M."/>
            <person name="Nguyen M."/>
            <person name="Nierman W.C."/>
            <person name="Osborne B.I."/>
            <person name="Pai G."/>
            <person name="Peterson J."/>
            <person name="Pham P.K."/>
            <person name="Rizzo M."/>
            <person name="Rooney T."/>
            <person name="Rowley D."/>
            <person name="Sakano H."/>
            <person name="Salzberg S.L."/>
            <person name="Schwartz J.R."/>
            <person name="Shinn P."/>
            <person name="Southwick A.M."/>
            <person name="Sun H."/>
            <person name="Tallon L.J."/>
            <person name="Tambunga G."/>
            <person name="Toriumi M.J."/>
            <person name="Town C.D."/>
            <person name="Utterback T."/>
            <person name="Van Aken S."/>
            <person name="Vaysberg M."/>
            <person name="Vysotskaia V.S."/>
            <person name="Walker M."/>
            <person name="Wu D."/>
            <person name="Yu G."/>
            <person name="Fraser C.M."/>
            <person name="Venter J.C."/>
            <person name="Davis R.W."/>
        </authorList>
    </citation>
    <scope>NUCLEOTIDE SEQUENCE [LARGE SCALE GENOMIC DNA]</scope>
    <source>
        <strain>cv. Columbia</strain>
    </source>
</reference>
<reference key="5">
    <citation type="journal article" date="2017" name="Plant J.">
        <title>Araport11: a complete reannotation of the Arabidopsis thaliana reference genome.</title>
        <authorList>
            <person name="Cheng C.Y."/>
            <person name="Krishnakumar V."/>
            <person name="Chan A.P."/>
            <person name="Thibaud-Nissen F."/>
            <person name="Schobel S."/>
            <person name="Town C.D."/>
        </authorList>
    </citation>
    <scope>GENOME REANNOTATION</scope>
    <source>
        <strain>cv. Columbia</strain>
    </source>
</reference>
<reference key="6">
    <citation type="journal article" date="2003" name="Science">
        <title>Empirical analysis of transcriptional activity in the Arabidopsis genome.</title>
        <authorList>
            <person name="Yamada K."/>
            <person name="Lim J."/>
            <person name="Dale J.M."/>
            <person name="Chen H."/>
            <person name="Shinn P."/>
            <person name="Palm C.J."/>
            <person name="Southwick A.M."/>
            <person name="Wu H.C."/>
            <person name="Kim C.J."/>
            <person name="Nguyen M."/>
            <person name="Pham P.K."/>
            <person name="Cheuk R.F."/>
            <person name="Karlin-Newmann G."/>
            <person name="Liu S.X."/>
            <person name="Lam B."/>
            <person name="Sakano H."/>
            <person name="Wu T."/>
            <person name="Yu G."/>
            <person name="Miranda M."/>
            <person name="Quach H.L."/>
            <person name="Tripp M."/>
            <person name="Chang C.H."/>
            <person name="Lee J.M."/>
            <person name="Toriumi M.J."/>
            <person name="Chan M.M."/>
            <person name="Tang C.C."/>
            <person name="Onodera C.S."/>
            <person name="Deng J.M."/>
            <person name="Akiyama K."/>
            <person name="Ansari Y."/>
            <person name="Arakawa T."/>
            <person name="Banh J."/>
            <person name="Banno F."/>
            <person name="Bowser L."/>
            <person name="Brooks S.Y."/>
            <person name="Carninci P."/>
            <person name="Chao Q."/>
            <person name="Choy N."/>
            <person name="Enju A."/>
            <person name="Goldsmith A.D."/>
            <person name="Gurjal M."/>
            <person name="Hansen N.F."/>
            <person name="Hayashizaki Y."/>
            <person name="Johnson-Hopson C."/>
            <person name="Hsuan V.W."/>
            <person name="Iida K."/>
            <person name="Karnes M."/>
            <person name="Khan S."/>
            <person name="Koesema E."/>
            <person name="Ishida J."/>
            <person name="Jiang P.X."/>
            <person name="Jones T."/>
            <person name="Kawai J."/>
            <person name="Kamiya A."/>
            <person name="Meyers C."/>
            <person name="Nakajima M."/>
            <person name="Narusaka M."/>
            <person name="Seki M."/>
            <person name="Sakurai T."/>
            <person name="Satou M."/>
            <person name="Tamse R."/>
            <person name="Vaysberg M."/>
            <person name="Wallender E.K."/>
            <person name="Wong C."/>
            <person name="Yamamura Y."/>
            <person name="Yuan S."/>
            <person name="Shinozaki K."/>
            <person name="Davis R.W."/>
            <person name="Theologis A."/>
            <person name="Ecker J.R."/>
        </authorList>
    </citation>
    <scope>NUCLEOTIDE SEQUENCE [LARGE SCALE MRNA]</scope>
    <source>
        <strain>cv. Columbia</strain>
    </source>
</reference>
<reference key="7">
    <citation type="submission" date="2002-03" db="EMBL/GenBank/DDBJ databases">
        <title>Full-length cDNA from Arabidopsis thaliana.</title>
        <authorList>
            <person name="Brover V.V."/>
            <person name="Troukhan M.E."/>
            <person name="Alexandrov N.A."/>
            <person name="Lu Y.-P."/>
            <person name="Flavell R.B."/>
            <person name="Feldmann K.A."/>
        </authorList>
    </citation>
    <scope>NUCLEOTIDE SEQUENCE [LARGE SCALE MRNA]</scope>
</reference>
<reference key="8">
    <citation type="submission" date="2006-07" db="EMBL/GenBank/DDBJ databases">
        <title>Large-scale analysis of RIKEN Arabidopsis full-length (RAFL) cDNAs.</title>
        <authorList>
            <person name="Totoki Y."/>
            <person name="Seki M."/>
            <person name="Ishida J."/>
            <person name="Nakajima M."/>
            <person name="Enju A."/>
            <person name="Kamiya A."/>
            <person name="Narusaka M."/>
            <person name="Shin-i T."/>
            <person name="Nakagawa M."/>
            <person name="Sakamoto N."/>
            <person name="Oishi K."/>
            <person name="Kohara Y."/>
            <person name="Kobayashi M."/>
            <person name="Toyoda A."/>
            <person name="Sakaki Y."/>
            <person name="Sakurai T."/>
            <person name="Iida K."/>
            <person name="Akiyama K."/>
            <person name="Satou M."/>
            <person name="Toyoda T."/>
            <person name="Konagaya A."/>
            <person name="Carninci P."/>
            <person name="Kawai J."/>
            <person name="Hayashizaki Y."/>
            <person name="Shinozaki K."/>
        </authorList>
    </citation>
    <scope>NUCLEOTIDE SEQUENCE [LARGE SCALE MRNA]</scope>
    <source>
        <strain>cv. Columbia</strain>
    </source>
</reference>
<reference key="9">
    <citation type="journal article" date="1996" name="Plant J.">
        <title>Further progress towards a catalogue of all Arabidopsis genes: analysis of a set of 5000 non-redundant ESTs.</title>
        <authorList>
            <person name="Cooke R."/>
            <person name="Raynal M."/>
            <person name="Laudie M."/>
            <person name="Grellet F."/>
            <person name="Delseny M."/>
            <person name="Morris P.-C."/>
            <person name="Guerrier D."/>
            <person name="Giraudat J."/>
            <person name="Quigley F."/>
            <person name="Clabault G."/>
            <person name="Li Y.-F."/>
            <person name="Mache R."/>
            <person name="Krivitzky M."/>
            <person name="Gy I.J.-J."/>
            <person name="Kreis M."/>
            <person name="Lecharny A."/>
            <person name="Parmentier Y."/>
            <person name="Marbach J."/>
            <person name="Fleck J."/>
            <person name="Clement B."/>
            <person name="Philipps G."/>
            <person name="Herve C."/>
            <person name="Bardet C."/>
            <person name="Tremousaygue D."/>
            <person name="Lescure B."/>
            <person name="Lacomme C."/>
            <person name="Roby D."/>
            <person name="Jourjon M.-F."/>
            <person name="Chabrier P."/>
            <person name="Charpenteau J.-L."/>
            <person name="Desprez T."/>
            <person name="Amselem J."/>
            <person name="Chiapello H."/>
            <person name="Hoefte H."/>
        </authorList>
    </citation>
    <scope>NUCLEOTIDE SEQUENCE [LARGE SCALE MRNA] OF 1-98</scope>
    <source>
        <strain>cv. Columbia</strain>
        <tissue>Dry seed</tissue>
    </source>
</reference>
<reference key="10">
    <citation type="journal article" date="1993" name="J. Biol. Chem.">
        <title>Formation of a stable adduct between ubiquitin and the Arabidopsis ubiquitin-conjugating enzyme, AtUBC1+.</title>
        <authorList>
            <person name="Sullivan M.L."/>
            <person name="Vierstra R.D."/>
        </authorList>
    </citation>
    <scope>FUNCTION</scope>
    <scope>MUTAGENESIS OF CYS-88</scope>
</reference>
<reference key="11">
    <citation type="journal article" date="1996" name="Plant Mol. Biol.">
        <title>Members of two gene families encoding ubiquitin-conjugating enzymes, AtUBC1-3 and AtUBC4-6, from Arabidopsis thaliana are differentially expressed.</title>
        <authorList>
            <person name="Thoma S."/>
            <person name="Sullivan M.L."/>
            <person name="Vierstra R.D."/>
        </authorList>
    </citation>
    <scope>TISSUE SPECIFICITY</scope>
    <scope>INDUCTION</scope>
</reference>
<reference key="12">
    <citation type="journal article" date="1992" name="J. Biol. Chem.">
        <title>Three-dimensional structure of a ubiquitin-conjugating enzyme (E2).</title>
        <authorList>
            <person name="Cook W.J."/>
            <person name="Jeffrey L.C."/>
            <person name="Sullivan M.L."/>
            <person name="Vierstra R.D."/>
        </authorList>
    </citation>
    <scope>X-RAY CRYSTALLOGRAPHY (2.4 ANGSTROMS)</scope>
</reference>
<feature type="chain" id="PRO_0000082570" description="Ubiquitin-conjugating enzyme E2 1">
    <location>
        <begin position="1"/>
        <end position="152"/>
    </location>
</feature>
<feature type="domain" description="UBC core" evidence="1">
    <location>
        <begin position="4"/>
        <end position="150"/>
    </location>
</feature>
<feature type="region of interest" description="Disordered" evidence="3">
    <location>
        <begin position="119"/>
        <end position="152"/>
    </location>
</feature>
<feature type="compositionally biased region" description="Basic and acidic residues" evidence="3">
    <location>
        <begin position="131"/>
        <end position="145"/>
    </location>
</feature>
<feature type="active site" description="Glycyl thioester intermediate" evidence="1">
    <location>
        <position position="88"/>
    </location>
</feature>
<feature type="mutagenesis site" description="Stabilization of the ester bond with the ubiquitin." evidence="5">
    <original>C</original>
    <variation>S</variation>
    <location>
        <position position="88"/>
    </location>
</feature>
<feature type="helix" evidence="7">
    <location>
        <begin position="4"/>
        <end position="18"/>
    </location>
</feature>
<feature type="strand" evidence="7">
    <location>
        <begin position="24"/>
        <end position="29"/>
    </location>
</feature>
<feature type="strand" evidence="7">
    <location>
        <begin position="32"/>
        <end position="41"/>
    </location>
</feature>
<feature type="turn" evidence="7">
    <location>
        <begin position="47"/>
        <end position="50"/>
    </location>
</feature>
<feature type="strand" evidence="7">
    <location>
        <begin position="52"/>
        <end position="58"/>
    </location>
</feature>
<feature type="turn" evidence="7">
    <location>
        <begin position="61"/>
        <end position="65"/>
    </location>
</feature>
<feature type="strand" evidence="7">
    <location>
        <begin position="69"/>
        <end position="74"/>
    </location>
</feature>
<feature type="strand" evidence="7">
    <location>
        <begin position="85"/>
        <end position="87"/>
    </location>
</feature>
<feature type="helix" evidence="7">
    <location>
        <begin position="90"/>
        <end position="92"/>
    </location>
</feature>
<feature type="helix" evidence="7">
    <location>
        <begin position="102"/>
        <end position="113"/>
    </location>
</feature>
<feature type="helix" evidence="7">
    <location>
        <begin position="124"/>
        <end position="132"/>
    </location>
</feature>
<feature type="helix" evidence="7">
    <location>
        <begin position="134"/>
        <end position="148"/>
    </location>
</feature>
<comment type="function">
    <text evidence="4 5">Accepts the ubiquitin from the E1 complex and catalyzes its covalent attachment to other proteins.</text>
</comment>
<comment type="catalytic activity">
    <reaction evidence="1 2">
        <text>S-ubiquitinyl-[E1 ubiquitin-activating enzyme]-L-cysteine + [E2 ubiquitin-conjugating enzyme]-L-cysteine = [E1 ubiquitin-activating enzyme]-L-cysteine + S-ubiquitinyl-[E2 ubiquitin-conjugating enzyme]-L-cysteine.</text>
        <dbReference type="EC" id="2.3.2.23"/>
    </reaction>
</comment>
<comment type="pathway">
    <text evidence="1">Protein modification; protein ubiquitination.</text>
</comment>
<comment type="tissue specificity">
    <text evidence="4 6">Ubiquitously expressed.</text>
</comment>
<comment type="induction">
    <text evidence="6">Not induced by heat shock.</text>
</comment>
<comment type="similarity">
    <text evidence="1">Belongs to the ubiquitin-conjugating enzyme family.</text>
</comment>
<gene>
    <name type="primary">UBC1</name>
    <name type="ordered locus">At1g14400</name>
    <name type="ORF">F14L17.17</name>
    <name type="ORF">F14L17_35</name>
</gene>
<keyword id="KW-0002">3D-structure</keyword>
<keyword id="KW-0067">ATP-binding</keyword>
<keyword id="KW-0547">Nucleotide-binding</keyword>
<keyword id="KW-1185">Reference proteome</keyword>
<keyword id="KW-0808">Transferase</keyword>
<keyword id="KW-0833">Ubl conjugation pathway</keyword>
<dbReference type="EC" id="2.3.2.23"/>
<dbReference type="EMBL" id="M62721">
    <property type="protein sequence ID" value="AAA32903.1"/>
    <property type="molecule type" value="mRNA"/>
</dbReference>
<dbReference type="EMBL" id="L19351">
    <property type="protein sequence ID" value="AAA32897.1"/>
    <property type="molecule type" value="Genomic_DNA"/>
</dbReference>
<dbReference type="EMBL" id="DQ027016">
    <property type="protein sequence ID" value="AAY44842.1"/>
    <property type="molecule type" value="mRNA"/>
</dbReference>
<dbReference type="EMBL" id="AC012188">
    <property type="protein sequence ID" value="AAF43940.1"/>
    <property type="molecule type" value="Genomic_DNA"/>
</dbReference>
<dbReference type="EMBL" id="CP002684">
    <property type="protein sequence ID" value="AEE29158.1"/>
    <property type="molecule type" value="Genomic_DNA"/>
</dbReference>
<dbReference type="EMBL" id="CP002684">
    <property type="protein sequence ID" value="AEE29159.1"/>
    <property type="molecule type" value="Genomic_DNA"/>
</dbReference>
<dbReference type="EMBL" id="AF332451">
    <property type="protein sequence ID" value="AAG48814.1"/>
    <property type="molecule type" value="mRNA"/>
</dbReference>
<dbReference type="EMBL" id="AY070074">
    <property type="protein sequence ID" value="AAL49769.1"/>
    <property type="molecule type" value="mRNA"/>
</dbReference>
<dbReference type="EMBL" id="AY091330">
    <property type="protein sequence ID" value="AAM14269.1"/>
    <property type="molecule type" value="mRNA"/>
</dbReference>
<dbReference type="EMBL" id="AY085783">
    <property type="protein sequence ID" value="AAM63000.1"/>
    <property type="molecule type" value="mRNA"/>
</dbReference>
<dbReference type="EMBL" id="AK226391">
    <property type="protein sequence ID" value="BAE98537.1"/>
    <property type="molecule type" value="mRNA"/>
</dbReference>
<dbReference type="EMBL" id="Z27262">
    <property type="protein sequence ID" value="CAA81773.1"/>
    <property type="molecule type" value="mRNA"/>
</dbReference>
<dbReference type="PIR" id="S43781">
    <property type="entry name" value="S43781"/>
</dbReference>
<dbReference type="RefSeq" id="NP_563951.1">
    <property type="nucleotide sequence ID" value="NM_101307.5"/>
</dbReference>
<dbReference type="RefSeq" id="NP_973825.1">
    <property type="nucleotide sequence ID" value="NM_202096.2"/>
</dbReference>
<dbReference type="PDB" id="2AAK">
    <property type="method" value="X-ray"/>
    <property type="resolution" value="2.40 A"/>
    <property type="chains" value="A=1-152"/>
</dbReference>
<dbReference type="PDBsum" id="2AAK"/>
<dbReference type="SMR" id="P25865"/>
<dbReference type="BioGRID" id="23242">
    <property type="interactions" value="3"/>
</dbReference>
<dbReference type="FunCoup" id="P25865">
    <property type="interactions" value="4253"/>
</dbReference>
<dbReference type="IntAct" id="P25865">
    <property type="interactions" value="2"/>
</dbReference>
<dbReference type="STRING" id="3702.P25865"/>
<dbReference type="PaxDb" id="3702-AT1G14400.1"/>
<dbReference type="ProteomicsDB" id="228689"/>
<dbReference type="EnsemblPlants" id="AT1G14400.1">
    <property type="protein sequence ID" value="AT1G14400.1"/>
    <property type="gene ID" value="AT1G14400"/>
</dbReference>
<dbReference type="EnsemblPlants" id="AT1G14400.2">
    <property type="protein sequence ID" value="AT1G14400.2"/>
    <property type="gene ID" value="AT1G14400"/>
</dbReference>
<dbReference type="GeneID" id="838002"/>
<dbReference type="Gramene" id="AT1G14400.1">
    <property type="protein sequence ID" value="AT1G14400.1"/>
    <property type="gene ID" value="AT1G14400"/>
</dbReference>
<dbReference type="Gramene" id="AT1G14400.2">
    <property type="protein sequence ID" value="AT1G14400.2"/>
    <property type="gene ID" value="AT1G14400"/>
</dbReference>
<dbReference type="KEGG" id="ath:AT1G14400"/>
<dbReference type="Araport" id="AT1G14400"/>
<dbReference type="TAIR" id="AT1G14400">
    <property type="gene designation" value="UBC1"/>
</dbReference>
<dbReference type="eggNOG" id="KOG0419">
    <property type="taxonomic scope" value="Eukaryota"/>
</dbReference>
<dbReference type="HOGENOM" id="CLU_030988_10_2_1"/>
<dbReference type="InParanoid" id="P25865"/>
<dbReference type="OMA" id="NCVIFGP"/>
<dbReference type="OrthoDB" id="1045763at2759"/>
<dbReference type="PhylomeDB" id="P25865"/>
<dbReference type="UniPathway" id="UPA00143"/>
<dbReference type="EvolutionaryTrace" id="P25865"/>
<dbReference type="PRO" id="PR:P25865"/>
<dbReference type="Proteomes" id="UP000006548">
    <property type="component" value="Chromosome 1"/>
</dbReference>
<dbReference type="ExpressionAtlas" id="P25865">
    <property type="expression patterns" value="baseline and differential"/>
</dbReference>
<dbReference type="GO" id="GO:0005829">
    <property type="term" value="C:cytosol"/>
    <property type="evidence" value="ECO:0007005"/>
    <property type="project" value="TAIR"/>
</dbReference>
<dbReference type="GO" id="GO:0005524">
    <property type="term" value="F:ATP binding"/>
    <property type="evidence" value="ECO:0007669"/>
    <property type="project" value="UniProtKB-KW"/>
</dbReference>
<dbReference type="GO" id="GO:0061631">
    <property type="term" value="F:ubiquitin conjugating enzyme activity"/>
    <property type="evidence" value="ECO:0007669"/>
    <property type="project" value="UniProtKB-EC"/>
</dbReference>
<dbReference type="GO" id="GO:0004842">
    <property type="term" value="F:ubiquitin-protein transferase activity"/>
    <property type="evidence" value="ECO:0000314"/>
    <property type="project" value="TAIR"/>
</dbReference>
<dbReference type="GO" id="GO:0016567">
    <property type="term" value="P:protein ubiquitination"/>
    <property type="evidence" value="ECO:0007669"/>
    <property type="project" value="UniProtKB-UniPathway"/>
</dbReference>
<dbReference type="GO" id="GO:0006511">
    <property type="term" value="P:ubiquitin-dependent protein catabolic process"/>
    <property type="evidence" value="ECO:0000314"/>
    <property type="project" value="TAIR"/>
</dbReference>
<dbReference type="GO" id="GO:0010228">
    <property type="term" value="P:vegetative to reproductive phase transition of meristem"/>
    <property type="evidence" value="ECO:0000316"/>
    <property type="project" value="TAIR"/>
</dbReference>
<dbReference type="CDD" id="cd23790">
    <property type="entry name" value="UBCc_UBE2A_2B"/>
    <property type="match status" value="1"/>
</dbReference>
<dbReference type="FunFam" id="3.10.110.10:FF:000017">
    <property type="entry name" value="Ubiquitin-conjugating enzyme E2 2"/>
    <property type="match status" value="1"/>
</dbReference>
<dbReference type="Gene3D" id="3.10.110.10">
    <property type="entry name" value="Ubiquitin Conjugating Enzyme"/>
    <property type="match status" value="1"/>
</dbReference>
<dbReference type="InterPro" id="IPR050113">
    <property type="entry name" value="Ub_conjugating_enzyme"/>
</dbReference>
<dbReference type="InterPro" id="IPR000608">
    <property type="entry name" value="UBQ-conjugat_E2_core"/>
</dbReference>
<dbReference type="InterPro" id="IPR023313">
    <property type="entry name" value="UBQ-conjugating_AS"/>
</dbReference>
<dbReference type="InterPro" id="IPR016135">
    <property type="entry name" value="UBQ-conjugating_enzyme/RWD"/>
</dbReference>
<dbReference type="PANTHER" id="PTHR24067">
    <property type="entry name" value="UBIQUITIN-CONJUGATING ENZYME E2"/>
    <property type="match status" value="1"/>
</dbReference>
<dbReference type="Pfam" id="PF00179">
    <property type="entry name" value="UQ_con"/>
    <property type="match status" value="1"/>
</dbReference>
<dbReference type="SMART" id="SM00212">
    <property type="entry name" value="UBCc"/>
    <property type="match status" value="1"/>
</dbReference>
<dbReference type="SUPFAM" id="SSF54495">
    <property type="entry name" value="UBC-like"/>
    <property type="match status" value="1"/>
</dbReference>
<dbReference type="PROSITE" id="PS00183">
    <property type="entry name" value="UBC_1"/>
    <property type="match status" value="1"/>
</dbReference>
<dbReference type="PROSITE" id="PS50127">
    <property type="entry name" value="UBC_2"/>
    <property type="match status" value="1"/>
</dbReference>
<evidence type="ECO:0000255" key="1">
    <source>
        <dbReference type="PROSITE-ProRule" id="PRU00388"/>
    </source>
</evidence>
<evidence type="ECO:0000255" key="2">
    <source>
        <dbReference type="PROSITE-ProRule" id="PRU10133"/>
    </source>
</evidence>
<evidence type="ECO:0000256" key="3">
    <source>
        <dbReference type="SAM" id="MobiDB-lite"/>
    </source>
</evidence>
<evidence type="ECO:0000269" key="4">
    <source>
    </source>
</evidence>
<evidence type="ECO:0000269" key="5">
    <source>
    </source>
</evidence>
<evidence type="ECO:0000269" key="6">
    <source>
    </source>
</evidence>
<evidence type="ECO:0007829" key="7">
    <source>
        <dbReference type="PDB" id="2AAK"/>
    </source>
</evidence>
<organism>
    <name type="scientific">Arabidopsis thaliana</name>
    <name type="common">Mouse-ear cress</name>
    <dbReference type="NCBI Taxonomy" id="3702"/>
    <lineage>
        <taxon>Eukaryota</taxon>
        <taxon>Viridiplantae</taxon>
        <taxon>Streptophyta</taxon>
        <taxon>Embryophyta</taxon>
        <taxon>Tracheophyta</taxon>
        <taxon>Spermatophyta</taxon>
        <taxon>Magnoliopsida</taxon>
        <taxon>eudicotyledons</taxon>
        <taxon>Gunneridae</taxon>
        <taxon>Pentapetalae</taxon>
        <taxon>rosids</taxon>
        <taxon>malvids</taxon>
        <taxon>Brassicales</taxon>
        <taxon>Brassicaceae</taxon>
        <taxon>Camelineae</taxon>
        <taxon>Arabidopsis</taxon>
    </lineage>
</organism>
<proteinExistence type="evidence at protein level"/>
<name>UBC1_ARATH</name>
<accession>P25865</accession>
<accession>Q4TZ08</accession>
<protein>
    <recommendedName>
        <fullName>Ubiquitin-conjugating enzyme E2 1</fullName>
        <ecNumber>2.3.2.23</ecNumber>
    </recommendedName>
    <alternativeName>
        <fullName>E2 ubiquitin-conjugating enzyme 1</fullName>
    </alternativeName>
    <alternativeName>
        <fullName>Ubiquitin carrier protein 1</fullName>
    </alternativeName>
    <alternativeName>
        <fullName>Ubiquitin-conjugating enzyme E2-17 kDa 1</fullName>
    </alternativeName>
    <alternativeName>
        <fullName>Ubiquitin-protein ligase 1</fullName>
    </alternativeName>
</protein>
<sequence>MSTPARKRLMRDFKRLQQDPPAGISGAPQDNNIMLWNAVIFGPDDTPWDGGTFKLSLQFSEDYPNKPPTVRFVSRMFHPNIYADGSICLDILQNQWSPIYDVAAILTSIQSLLCDPNPNSPANSEAARMYSESKREYNRRVRDVVEQSWTAD</sequence>